<dbReference type="EC" id="2.8.1.13" evidence="1"/>
<dbReference type="EMBL" id="CP000936">
    <property type="protein sequence ID" value="ACA37448.1"/>
    <property type="molecule type" value="Genomic_DNA"/>
</dbReference>
<dbReference type="RefSeq" id="WP_001282980.1">
    <property type="nucleotide sequence ID" value="NC_010380.1"/>
</dbReference>
<dbReference type="SMR" id="B1I833"/>
<dbReference type="KEGG" id="spv:SPH_0234"/>
<dbReference type="HOGENOM" id="CLU_035188_1_0_9"/>
<dbReference type="Proteomes" id="UP000002163">
    <property type="component" value="Chromosome"/>
</dbReference>
<dbReference type="GO" id="GO:0005737">
    <property type="term" value="C:cytoplasm"/>
    <property type="evidence" value="ECO:0007669"/>
    <property type="project" value="UniProtKB-SubCell"/>
</dbReference>
<dbReference type="GO" id="GO:0005524">
    <property type="term" value="F:ATP binding"/>
    <property type="evidence" value="ECO:0007669"/>
    <property type="project" value="UniProtKB-KW"/>
</dbReference>
<dbReference type="GO" id="GO:0000049">
    <property type="term" value="F:tRNA binding"/>
    <property type="evidence" value="ECO:0007669"/>
    <property type="project" value="UniProtKB-KW"/>
</dbReference>
<dbReference type="GO" id="GO:0103016">
    <property type="term" value="F:tRNA-uridine 2-sulfurtransferase activity"/>
    <property type="evidence" value="ECO:0007669"/>
    <property type="project" value="UniProtKB-EC"/>
</dbReference>
<dbReference type="GO" id="GO:0002143">
    <property type="term" value="P:tRNA wobble position uridine thiolation"/>
    <property type="evidence" value="ECO:0007669"/>
    <property type="project" value="TreeGrafter"/>
</dbReference>
<dbReference type="CDD" id="cd01998">
    <property type="entry name" value="MnmA_TRMU-like"/>
    <property type="match status" value="1"/>
</dbReference>
<dbReference type="FunFam" id="2.30.30.280:FF:000001">
    <property type="entry name" value="tRNA-specific 2-thiouridylase MnmA"/>
    <property type="match status" value="1"/>
</dbReference>
<dbReference type="FunFam" id="2.40.30.10:FF:000023">
    <property type="entry name" value="tRNA-specific 2-thiouridylase MnmA"/>
    <property type="match status" value="1"/>
</dbReference>
<dbReference type="FunFam" id="3.40.50.620:FF:000004">
    <property type="entry name" value="tRNA-specific 2-thiouridylase MnmA"/>
    <property type="match status" value="1"/>
</dbReference>
<dbReference type="Gene3D" id="2.30.30.280">
    <property type="entry name" value="Adenine nucleotide alpha hydrolases-like domains"/>
    <property type="match status" value="1"/>
</dbReference>
<dbReference type="Gene3D" id="3.40.50.620">
    <property type="entry name" value="HUPs"/>
    <property type="match status" value="1"/>
</dbReference>
<dbReference type="Gene3D" id="2.40.30.10">
    <property type="entry name" value="Translation factors"/>
    <property type="match status" value="1"/>
</dbReference>
<dbReference type="HAMAP" id="MF_00144">
    <property type="entry name" value="tRNA_thiouridyl_MnmA"/>
    <property type="match status" value="1"/>
</dbReference>
<dbReference type="InterPro" id="IPR004506">
    <property type="entry name" value="MnmA-like"/>
</dbReference>
<dbReference type="InterPro" id="IPR046885">
    <property type="entry name" value="MnmA-like_C"/>
</dbReference>
<dbReference type="InterPro" id="IPR046884">
    <property type="entry name" value="MnmA-like_central"/>
</dbReference>
<dbReference type="InterPro" id="IPR023382">
    <property type="entry name" value="MnmA-like_central_sf"/>
</dbReference>
<dbReference type="InterPro" id="IPR014729">
    <property type="entry name" value="Rossmann-like_a/b/a_fold"/>
</dbReference>
<dbReference type="NCBIfam" id="NF001138">
    <property type="entry name" value="PRK00143.1"/>
    <property type="match status" value="1"/>
</dbReference>
<dbReference type="NCBIfam" id="TIGR00420">
    <property type="entry name" value="trmU"/>
    <property type="match status" value="1"/>
</dbReference>
<dbReference type="PANTHER" id="PTHR11933:SF5">
    <property type="entry name" value="MITOCHONDRIAL TRNA-SPECIFIC 2-THIOURIDYLASE 1"/>
    <property type="match status" value="1"/>
</dbReference>
<dbReference type="PANTHER" id="PTHR11933">
    <property type="entry name" value="TRNA 5-METHYLAMINOMETHYL-2-THIOURIDYLATE -METHYLTRANSFERASE"/>
    <property type="match status" value="1"/>
</dbReference>
<dbReference type="Pfam" id="PF03054">
    <property type="entry name" value="tRNA_Me_trans"/>
    <property type="match status" value="1"/>
</dbReference>
<dbReference type="Pfam" id="PF20258">
    <property type="entry name" value="tRNA_Me_trans_C"/>
    <property type="match status" value="1"/>
</dbReference>
<dbReference type="Pfam" id="PF20259">
    <property type="entry name" value="tRNA_Me_trans_M"/>
    <property type="match status" value="1"/>
</dbReference>
<dbReference type="SUPFAM" id="SSF52402">
    <property type="entry name" value="Adenine nucleotide alpha hydrolases-like"/>
    <property type="match status" value="1"/>
</dbReference>
<gene>
    <name evidence="1" type="primary">mnmA</name>
    <name type="ordered locus">SPH_0234</name>
</gene>
<name>MNMA_STRPI</name>
<reference key="1">
    <citation type="journal article" date="2010" name="Genome Biol.">
        <title>Structure and dynamics of the pan-genome of Streptococcus pneumoniae and closely related species.</title>
        <authorList>
            <person name="Donati C."/>
            <person name="Hiller N.L."/>
            <person name="Tettelin H."/>
            <person name="Muzzi A."/>
            <person name="Croucher N.J."/>
            <person name="Angiuoli S.V."/>
            <person name="Oggioni M."/>
            <person name="Dunning Hotopp J.C."/>
            <person name="Hu F.Z."/>
            <person name="Riley D.R."/>
            <person name="Covacci A."/>
            <person name="Mitchell T.J."/>
            <person name="Bentley S.D."/>
            <person name="Kilian M."/>
            <person name="Ehrlich G.D."/>
            <person name="Rappuoli R."/>
            <person name="Moxon E.R."/>
            <person name="Masignani V."/>
        </authorList>
    </citation>
    <scope>NUCLEOTIDE SEQUENCE [LARGE SCALE GENOMIC DNA]</scope>
    <source>
        <strain>Hungary19A-6</strain>
    </source>
</reference>
<protein>
    <recommendedName>
        <fullName evidence="1">tRNA-specific 2-thiouridylase MnmA</fullName>
        <ecNumber evidence="1">2.8.1.13</ecNumber>
    </recommendedName>
</protein>
<feature type="chain" id="PRO_0000349810" description="tRNA-specific 2-thiouridylase MnmA">
    <location>
        <begin position="1"/>
        <end position="373"/>
    </location>
</feature>
<feature type="region of interest" description="Interaction with target base in tRNA" evidence="1">
    <location>
        <begin position="98"/>
        <end position="100"/>
    </location>
</feature>
<feature type="region of interest" description="Interaction with tRNA" evidence="1">
    <location>
        <begin position="150"/>
        <end position="152"/>
    </location>
</feature>
<feature type="region of interest" description="Interaction with tRNA" evidence="1">
    <location>
        <begin position="312"/>
        <end position="313"/>
    </location>
</feature>
<feature type="active site" description="Nucleophile" evidence="1">
    <location>
        <position position="103"/>
    </location>
</feature>
<feature type="active site" description="Cysteine persulfide intermediate" evidence="1">
    <location>
        <position position="200"/>
    </location>
</feature>
<feature type="binding site" evidence="1">
    <location>
        <begin position="12"/>
        <end position="19"/>
    </location>
    <ligand>
        <name>ATP</name>
        <dbReference type="ChEBI" id="CHEBI:30616"/>
    </ligand>
</feature>
<feature type="binding site" evidence="1">
    <location>
        <position position="38"/>
    </location>
    <ligand>
        <name>ATP</name>
        <dbReference type="ChEBI" id="CHEBI:30616"/>
    </ligand>
</feature>
<feature type="binding site" evidence="1">
    <location>
        <position position="127"/>
    </location>
    <ligand>
        <name>ATP</name>
        <dbReference type="ChEBI" id="CHEBI:30616"/>
    </ligand>
</feature>
<feature type="site" description="Interaction with tRNA" evidence="1">
    <location>
        <position position="128"/>
    </location>
</feature>
<feature type="site" description="Interaction with tRNA" evidence="1">
    <location>
        <position position="344"/>
    </location>
</feature>
<feature type="disulfide bond" description="Alternate" evidence="1">
    <location>
        <begin position="103"/>
        <end position="200"/>
    </location>
</feature>
<accession>B1I833</accession>
<sequence>MSDNSKTRVVVGMSGGVDSSVTALLLKEQGYDVIGIFMKNWDDTDENGVCTATEDYKDVVAVADQIGIPYYSVNFEKEYWDRVFEYFLAEYRAGRTPNPDVMCNKEIKFKAFLDYAMTLGADYVATGHYARVARDEDGTVHMLRGVDNGKDQTYFLSQLSQEQLQKTMFPLGHLEKPEVRRLAEEAGLATAKKKDSTGICFIGEKNFKNLLSNYLPAQPGRMMTVDGRDMGEHAGLMYYTIGQRGGLGIGGQHGGDNAPWFVVGKDLSKNILYVGQGFYHDSLMSTSLEASQVHFTREMPEEFTLECTAKFRYRQPDSKVTVHVKGDKAEVIFAEPQRAITPGQAVVFYDGEECLGGGLIDNAYRDGQVCQYI</sequence>
<comment type="function">
    <text evidence="1">Catalyzes the 2-thiolation of uridine at the wobble position (U34) of tRNA, leading to the formation of s(2)U34.</text>
</comment>
<comment type="catalytic activity">
    <reaction evidence="1">
        <text>S-sulfanyl-L-cysteinyl-[protein] + uridine(34) in tRNA + AH2 + ATP = 2-thiouridine(34) in tRNA + L-cysteinyl-[protein] + A + AMP + diphosphate + H(+)</text>
        <dbReference type="Rhea" id="RHEA:47032"/>
        <dbReference type="Rhea" id="RHEA-COMP:10131"/>
        <dbReference type="Rhea" id="RHEA-COMP:11726"/>
        <dbReference type="Rhea" id="RHEA-COMP:11727"/>
        <dbReference type="Rhea" id="RHEA-COMP:11728"/>
        <dbReference type="ChEBI" id="CHEBI:13193"/>
        <dbReference type="ChEBI" id="CHEBI:15378"/>
        <dbReference type="ChEBI" id="CHEBI:17499"/>
        <dbReference type="ChEBI" id="CHEBI:29950"/>
        <dbReference type="ChEBI" id="CHEBI:30616"/>
        <dbReference type="ChEBI" id="CHEBI:33019"/>
        <dbReference type="ChEBI" id="CHEBI:61963"/>
        <dbReference type="ChEBI" id="CHEBI:65315"/>
        <dbReference type="ChEBI" id="CHEBI:87170"/>
        <dbReference type="ChEBI" id="CHEBI:456215"/>
        <dbReference type="EC" id="2.8.1.13"/>
    </reaction>
</comment>
<comment type="subcellular location">
    <subcellularLocation>
        <location evidence="1">Cytoplasm</location>
    </subcellularLocation>
</comment>
<comment type="similarity">
    <text evidence="1">Belongs to the MnmA/TRMU family.</text>
</comment>
<organism>
    <name type="scientific">Streptococcus pneumoniae (strain Hungary19A-6)</name>
    <dbReference type="NCBI Taxonomy" id="487214"/>
    <lineage>
        <taxon>Bacteria</taxon>
        <taxon>Bacillati</taxon>
        <taxon>Bacillota</taxon>
        <taxon>Bacilli</taxon>
        <taxon>Lactobacillales</taxon>
        <taxon>Streptococcaceae</taxon>
        <taxon>Streptococcus</taxon>
    </lineage>
</organism>
<keyword id="KW-0067">ATP-binding</keyword>
<keyword id="KW-0963">Cytoplasm</keyword>
<keyword id="KW-1015">Disulfide bond</keyword>
<keyword id="KW-0547">Nucleotide-binding</keyword>
<keyword id="KW-0694">RNA-binding</keyword>
<keyword id="KW-0808">Transferase</keyword>
<keyword id="KW-0819">tRNA processing</keyword>
<keyword id="KW-0820">tRNA-binding</keyword>
<evidence type="ECO:0000255" key="1">
    <source>
        <dbReference type="HAMAP-Rule" id="MF_00144"/>
    </source>
</evidence>
<proteinExistence type="inferred from homology"/>